<keyword id="KW-0002">3D-structure</keyword>
<keyword id="KW-0597">Phosphoprotein</keyword>
<keyword id="KW-0647">Proteasome</keyword>
<keyword id="KW-1185">Reference proteome</keyword>
<keyword id="KW-0677">Repeat</keyword>
<sequence>MVLEATMICIDNSEWMRNGDYSPSRLQAQTEAVNLLCGAKTQSNPENTVGILTMAGKGVRVLTTPTSDLGKILACMHGLDVGGEINLTAAIQIAQLALKHRQNKNQRQRIIVFAGSPIKYEKKALEIVGKRLKKNSVSLDIVNFGEDDDEEKPQKLEALLTAVNNNDGSHIVHVPSGANALSDVLLSTPVFTGDEGASGYVSAAAAAAAAGGDFDFGVDPNIDPELALALRVSMEEERARQEAAAKKAADEAGQKDKDGDTASASQETVARTTDKNAEPMDEDSALLDQAIAMSVGDVNMSEAADEDQDLALALQMSMSGEESSEATGAGNNLLGNQAFISSVLSSLPGVDPNDPAVKELLASLPDESKRTEEEESSSKKGEDEKK</sequence>
<feature type="chain" id="PRO_0000173832" description="26S proteasome non-ATPase regulatory subunit 4 homolog">
    <location>
        <begin position="1"/>
        <end position="386"/>
    </location>
</feature>
<feature type="domain" description="VWFA" evidence="2">
    <location>
        <begin position="5"/>
        <end position="190"/>
    </location>
</feature>
<feature type="domain" description="UIM 1" evidence="1">
    <location>
        <begin position="221"/>
        <end position="240"/>
    </location>
</feature>
<feature type="domain" description="UIM 2" evidence="1">
    <location>
        <begin position="282"/>
        <end position="301"/>
    </location>
</feature>
<feature type="domain" description="UIM 3" evidence="1">
    <location>
        <begin position="305"/>
        <end position="324"/>
    </location>
</feature>
<feature type="region of interest" description="Disordered" evidence="3">
    <location>
        <begin position="241"/>
        <end position="281"/>
    </location>
</feature>
<feature type="region of interest" description="Disordered" evidence="3">
    <location>
        <begin position="344"/>
        <end position="386"/>
    </location>
</feature>
<feature type="compositionally biased region" description="Basic and acidic residues" evidence="3">
    <location>
        <begin position="241"/>
        <end position="260"/>
    </location>
</feature>
<feature type="compositionally biased region" description="Polar residues" evidence="3">
    <location>
        <begin position="262"/>
        <end position="271"/>
    </location>
</feature>
<feature type="compositionally biased region" description="Basic and acidic residues" evidence="3">
    <location>
        <begin position="366"/>
        <end position="386"/>
    </location>
</feature>
<feature type="modified residue" description="Phosphoserine" evidence="19">
    <location>
        <position position="263"/>
    </location>
</feature>
<feature type="sequence conflict" description="In Ref. 5; AAM65985." evidence="18" ref="5">
    <original>G</original>
    <variation>C</variation>
    <location>
        <position position="253"/>
    </location>
</feature>
<feature type="sequence conflict" description="In Ref. 5; AAM65985." evidence="18" ref="5">
    <original>T</original>
    <variation>H</variation>
    <location>
        <position position="371"/>
    </location>
</feature>
<feature type="strand" evidence="20">
    <location>
        <begin position="4"/>
        <end position="10"/>
    </location>
</feature>
<feature type="helix" evidence="20">
    <location>
        <begin position="14"/>
        <end position="16"/>
    </location>
</feature>
<feature type="strand" evidence="21">
    <location>
        <begin position="21"/>
        <end position="23"/>
    </location>
</feature>
<feature type="helix" evidence="20">
    <location>
        <begin position="25"/>
        <end position="43"/>
    </location>
</feature>
<feature type="strand" evidence="20">
    <location>
        <begin position="48"/>
        <end position="53"/>
    </location>
</feature>
<feature type="strand" evidence="20">
    <location>
        <begin position="60"/>
        <end position="67"/>
    </location>
</feature>
<feature type="helix" evidence="20">
    <location>
        <begin position="69"/>
        <end position="75"/>
    </location>
</feature>
<feature type="turn" evidence="20">
    <location>
        <begin position="76"/>
        <end position="78"/>
    </location>
</feature>
<feature type="helix" evidence="20">
    <location>
        <begin position="87"/>
        <end position="99"/>
    </location>
</feature>
<feature type="strand" evidence="20">
    <location>
        <begin position="106"/>
        <end position="114"/>
    </location>
</feature>
<feature type="helix" evidence="20">
    <location>
        <begin position="122"/>
        <end position="134"/>
    </location>
</feature>
<feature type="strand" evidence="20">
    <location>
        <begin position="137"/>
        <end position="143"/>
    </location>
</feature>
<feature type="helix" evidence="20">
    <location>
        <begin position="151"/>
        <end position="163"/>
    </location>
</feature>
<feature type="strand" evidence="20">
    <location>
        <begin position="170"/>
        <end position="173"/>
    </location>
</feature>
<feature type="strand" evidence="21">
    <location>
        <begin position="176"/>
        <end position="179"/>
    </location>
</feature>
<feature type="helix" evidence="20">
    <location>
        <begin position="181"/>
        <end position="186"/>
    </location>
</feature>
<feature type="helix" evidence="20">
    <location>
        <begin position="189"/>
        <end position="192"/>
    </location>
</feature>
<protein>
    <recommendedName>
        <fullName>26S proteasome non-ATPase regulatory subunit 4 homolog</fullName>
    </recommendedName>
    <alternativeName>
        <fullName>26S proteasome regulatory subunit RPN10</fullName>
        <shortName>AtRPN10</shortName>
    </alternativeName>
    <alternativeName>
        <fullName>26S proteasome regulatory subunit S5A homolog</fullName>
    </alternativeName>
    <alternativeName>
        <fullName>Multiubiquitin chain-binding protein 1</fullName>
        <shortName>AtMCB1</shortName>
    </alternativeName>
</protein>
<accession>P55034</accession>
<accession>Q8L9G3</accession>
<organism>
    <name type="scientific">Arabidopsis thaliana</name>
    <name type="common">Mouse-ear cress</name>
    <dbReference type="NCBI Taxonomy" id="3702"/>
    <lineage>
        <taxon>Eukaryota</taxon>
        <taxon>Viridiplantae</taxon>
        <taxon>Streptophyta</taxon>
        <taxon>Embryophyta</taxon>
        <taxon>Tracheophyta</taxon>
        <taxon>Spermatophyta</taxon>
        <taxon>Magnoliopsida</taxon>
        <taxon>eudicotyledons</taxon>
        <taxon>Gunneridae</taxon>
        <taxon>Pentapetalae</taxon>
        <taxon>rosids</taxon>
        <taxon>malvids</taxon>
        <taxon>Brassicales</taxon>
        <taxon>Brassicaceae</taxon>
        <taxon>Camelineae</taxon>
        <taxon>Arabidopsis</taxon>
    </lineage>
</organism>
<comment type="function">
    <text evidence="4 7 8 9 12 13 14 15 16 17">Plays a role in maintaining the structural integrity of the 19S regulatory particle (RP), subcomplex of the 26S proteasome. Plays a major role in both the direct and indirect recognition of ubiquitinated substrates of ubiquitin/26S proteasome-mediated proteolysis (UPP). Binds and presumably selects ubiquitin-conjugates for destruction. Prefers multiubiquitin chains rather than single ubiquitins, with a binding affinity for 'Lys-48'-linked ubiquitin chains. Acts as a potential docking subunit for both ubiquitin receptors RAD23s and DSK2s. Plays a role in the growth and development via the proteasome-dependent degradation of the ABA-signaling protein ABI5/DPBF1. Plays an important role for balancing cell expansion with cell proliferation rates during shoot development.</text>
</comment>
<comment type="subunit">
    <text evidence="6 9 10 11 12 17">Component of the 19S regulatory particle (RP/PA700) base subcomplex of the 26S proteasome. The 26S proteasome is composed of a core protease (CP), known as the 20S proteasome, capped at one or both ends by the 19S regulatory particle (RP/PA700). The RP/PA700 complex is composed of at least 17 different subunits in two subcomplexes, the base and the lid, which form the portions proximal and distal to the 20S proteolytic core, respectively. Interacts with PI4KG4. Interacts with RAD23s and DSK2s via its UIM3 and UIM1 motif, respectively. Interacts with 'Lys-48'-linked polyubiquitin chains via its UIM1 motif.</text>
</comment>
<comment type="interaction">
    <interactant intactId="EBI-2620423">
        <id>P55034</id>
    </interactant>
    <interactant intactId="EBI-4433040">
        <id>Q9SII8</id>
        <label>DSK2B</label>
    </interactant>
    <organismsDiffer>false</organismsDiffer>
    <experiments>2</experiments>
</comment>
<comment type="interaction">
    <interactant intactId="EBI-2620423">
        <id>P55034</id>
    </interactant>
    <interactant intactId="EBI-4460083">
        <id>Q9SFT9</id>
        <label>T1B9.26</label>
    </interactant>
    <organismsDiffer>false</organismsDiffer>
    <experiments>3</experiments>
</comment>
<comment type="interaction">
    <interactant intactId="EBI-2620423">
        <id>P55034</id>
    </interactant>
    <interactant intactId="EBI-3390054">
        <id>P0CG48</id>
        <label>UBC</label>
    </interactant>
    <organismsDiffer>true</organismsDiffer>
    <experiments>2</experiments>
</comment>
<comment type="tissue specificity">
    <text evidence="5">Ubiquitous with highest expression in flowers.</text>
</comment>
<comment type="PTM">
    <text evidence="6">Phosphorylated by PI4KG4 in vitro.</text>
</comment>
<comment type="disruption phenotype">
    <text evidence="4 7 8 9 12 13">Displays reduced seed germination, growth rate, stamen number, genetic transmission through the male gamete, hormone-induced cell division and increased oxidative stress tolerance. Is also more sensitive to abscisic acid (ABA), salt, sucrose stress, heat shock and DNA-damaging agents and shows a decreased sensitivity to cytokinin and auxin. In flowers, epidermal cells in petals were larger than those in the wild type.</text>
</comment>
<comment type="similarity">
    <text evidence="18">Belongs to the proteasome subunit S5A family.</text>
</comment>
<proteinExistence type="evidence at protein level"/>
<dbReference type="EMBL" id="U33269">
    <property type="protein sequence ID" value="AAA85583.1"/>
    <property type="molecule type" value="mRNA"/>
</dbReference>
<dbReference type="EMBL" id="AL035540">
    <property type="protein sequence ID" value="CAB37519.1"/>
    <property type="molecule type" value="Genomic_DNA"/>
</dbReference>
<dbReference type="EMBL" id="AL035656">
    <property type="status" value="NOT_ANNOTATED_CDS"/>
    <property type="molecule type" value="Genomic_DNA"/>
</dbReference>
<dbReference type="EMBL" id="AL161593">
    <property type="protein sequence ID" value="CAB80527.1"/>
    <property type="molecule type" value="Genomic_DNA"/>
</dbReference>
<dbReference type="EMBL" id="CP002687">
    <property type="protein sequence ID" value="AEE86956.1"/>
    <property type="molecule type" value="Genomic_DNA"/>
</dbReference>
<dbReference type="EMBL" id="AF360319">
    <property type="protein sequence ID" value="AAK26029.1"/>
    <property type="molecule type" value="mRNA"/>
</dbReference>
<dbReference type="EMBL" id="AY113889">
    <property type="protein sequence ID" value="AAM44937.1"/>
    <property type="molecule type" value="mRNA"/>
</dbReference>
<dbReference type="EMBL" id="AY088449">
    <property type="protein sequence ID" value="AAM65985.1"/>
    <property type="molecule type" value="mRNA"/>
</dbReference>
<dbReference type="PIR" id="T05691">
    <property type="entry name" value="T05691"/>
</dbReference>
<dbReference type="RefSeq" id="NP_195575.1">
    <property type="nucleotide sequence ID" value="NM_120024.3"/>
</dbReference>
<dbReference type="PDB" id="8J4A">
    <property type="method" value="X-ray"/>
    <property type="resolution" value="1.97 A"/>
    <property type="chains" value="B/D=1-193"/>
</dbReference>
<dbReference type="PDB" id="8JTK">
    <property type="method" value="X-ray"/>
    <property type="resolution" value="1.57 A"/>
    <property type="chains" value="B=2-193"/>
</dbReference>
<dbReference type="PDB" id="8JTL">
    <property type="method" value="X-ray"/>
    <property type="resolution" value="1.78 A"/>
    <property type="chains" value="A/B=2-193"/>
</dbReference>
<dbReference type="PDB" id="8PFD">
    <property type="method" value="X-ray"/>
    <property type="resolution" value="2.17 A"/>
    <property type="chains" value="B=2-193"/>
</dbReference>
<dbReference type="PDBsum" id="8J4A"/>
<dbReference type="PDBsum" id="8JTK"/>
<dbReference type="PDBsum" id="8JTL"/>
<dbReference type="PDBsum" id="8PFD"/>
<dbReference type="SMR" id="P55034"/>
<dbReference type="BioGRID" id="15299">
    <property type="interactions" value="47"/>
</dbReference>
<dbReference type="FunCoup" id="P55034">
    <property type="interactions" value="4582"/>
</dbReference>
<dbReference type="IntAct" id="P55034">
    <property type="interactions" value="11"/>
</dbReference>
<dbReference type="MINT" id="P55034"/>
<dbReference type="STRING" id="3702.P55034"/>
<dbReference type="iPTMnet" id="P55034"/>
<dbReference type="PaxDb" id="3702-AT4G38630.1"/>
<dbReference type="ProteomicsDB" id="224827"/>
<dbReference type="EnsemblPlants" id="AT4G38630.1">
    <property type="protein sequence ID" value="AT4G38630.1"/>
    <property type="gene ID" value="AT4G38630"/>
</dbReference>
<dbReference type="GeneID" id="830019"/>
<dbReference type="Gramene" id="AT4G38630.1">
    <property type="protein sequence ID" value="AT4G38630.1"/>
    <property type="gene ID" value="AT4G38630"/>
</dbReference>
<dbReference type="KEGG" id="ath:AT4G38630"/>
<dbReference type="Araport" id="AT4G38630"/>
<dbReference type="TAIR" id="AT4G38630">
    <property type="gene designation" value="RPN10"/>
</dbReference>
<dbReference type="eggNOG" id="KOG2884">
    <property type="taxonomic scope" value="Eukaryota"/>
</dbReference>
<dbReference type="HOGENOM" id="CLU_033293_0_0_1"/>
<dbReference type="InParanoid" id="P55034"/>
<dbReference type="OMA" id="RIVIFNC"/>
<dbReference type="OrthoDB" id="1731724at2759"/>
<dbReference type="PhylomeDB" id="P55034"/>
<dbReference type="CD-CODE" id="4299E36E">
    <property type="entry name" value="Nucleolus"/>
</dbReference>
<dbReference type="PRO" id="PR:P55034"/>
<dbReference type="Proteomes" id="UP000006548">
    <property type="component" value="Chromosome 4"/>
</dbReference>
<dbReference type="ExpressionAtlas" id="P55034">
    <property type="expression patterns" value="baseline and differential"/>
</dbReference>
<dbReference type="GO" id="GO:0005634">
    <property type="term" value="C:nucleus"/>
    <property type="evidence" value="ECO:0000304"/>
    <property type="project" value="TAIR"/>
</dbReference>
<dbReference type="GO" id="GO:0005886">
    <property type="term" value="C:plasma membrane"/>
    <property type="evidence" value="ECO:0007005"/>
    <property type="project" value="TAIR"/>
</dbReference>
<dbReference type="GO" id="GO:0000502">
    <property type="term" value="C:proteasome complex"/>
    <property type="evidence" value="ECO:0000314"/>
    <property type="project" value="TAIR"/>
</dbReference>
<dbReference type="GO" id="GO:0001653">
    <property type="term" value="F:peptide receptor activity"/>
    <property type="evidence" value="ECO:0000314"/>
    <property type="project" value="TAIR"/>
</dbReference>
<dbReference type="GO" id="GO:0031593">
    <property type="term" value="F:polyubiquitin modification-dependent protein binding"/>
    <property type="evidence" value="ECO:0000314"/>
    <property type="project" value="UniProtKB"/>
</dbReference>
<dbReference type="GO" id="GO:0006974">
    <property type="term" value="P:DNA damage response"/>
    <property type="evidence" value="ECO:0000315"/>
    <property type="project" value="TAIR"/>
</dbReference>
<dbReference type="GO" id="GO:0048366">
    <property type="term" value="P:leaf development"/>
    <property type="evidence" value="ECO:0000315"/>
    <property type="project" value="TAIR"/>
</dbReference>
<dbReference type="GO" id="GO:0010150">
    <property type="term" value="P:leaf senescence"/>
    <property type="evidence" value="ECO:0000315"/>
    <property type="project" value="TAIR"/>
</dbReference>
<dbReference type="GO" id="GO:0009555">
    <property type="term" value="P:pollen development"/>
    <property type="evidence" value="ECO:0000315"/>
    <property type="project" value="TAIR"/>
</dbReference>
<dbReference type="GO" id="GO:0048528">
    <property type="term" value="P:post-embryonic root development"/>
    <property type="evidence" value="ECO:0000315"/>
    <property type="project" value="TAIR"/>
</dbReference>
<dbReference type="GO" id="GO:0043248">
    <property type="term" value="P:proteasome assembly"/>
    <property type="evidence" value="ECO:0000315"/>
    <property type="project" value="TAIR"/>
</dbReference>
<dbReference type="GO" id="GO:0043161">
    <property type="term" value="P:proteasome-mediated ubiquitin-dependent protein catabolic process"/>
    <property type="evidence" value="ECO:0000315"/>
    <property type="project" value="TAIR"/>
</dbReference>
<dbReference type="GO" id="GO:0030163">
    <property type="term" value="P:protein catabolic process"/>
    <property type="evidence" value="ECO:0000304"/>
    <property type="project" value="TAIR"/>
</dbReference>
<dbReference type="GO" id="GO:0010029">
    <property type="term" value="P:regulation of seed germination"/>
    <property type="evidence" value="ECO:0000315"/>
    <property type="project" value="TAIR"/>
</dbReference>
<dbReference type="GO" id="GO:0009737">
    <property type="term" value="P:response to abscisic acid"/>
    <property type="evidence" value="ECO:0000315"/>
    <property type="project" value="TAIR"/>
</dbReference>
<dbReference type="GO" id="GO:0009733">
    <property type="term" value="P:response to auxin"/>
    <property type="evidence" value="ECO:0000315"/>
    <property type="project" value="TAIR"/>
</dbReference>
<dbReference type="GO" id="GO:0009735">
    <property type="term" value="P:response to cytokinin"/>
    <property type="evidence" value="ECO:0000315"/>
    <property type="project" value="TAIR"/>
</dbReference>
<dbReference type="GO" id="GO:0009408">
    <property type="term" value="P:response to heat"/>
    <property type="evidence" value="ECO:0000315"/>
    <property type="project" value="TAIR"/>
</dbReference>
<dbReference type="GO" id="GO:0051788">
    <property type="term" value="P:response to misfolded protein"/>
    <property type="evidence" value="ECO:0000315"/>
    <property type="project" value="TAIR"/>
</dbReference>
<dbReference type="GO" id="GO:0009651">
    <property type="term" value="P:response to salt stress"/>
    <property type="evidence" value="ECO:0000315"/>
    <property type="project" value="TAIR"/>
</dbReference>
<dbReference type="GO" id="GO:0009744">
    <property type="term" value="P:response to sucrose"/>
    <property type="evidence" value="ECO:0000315"/>
    <property type="project" value="TAIR"/>
</dbReference>
<dbReference type="GO" id="GO:0048767">
    <property type="term" value="P:root hair elongation"/>
    <property type="evidence" value="ECO:0000315"/>
    <property type="project" value="TAIR"/>
</dbReference>
<dbReference type="GO" id="GO:0048455">
    <property type="term" value="P:stamen formation"/>
    <property type="evidence" value="ECO:0000315"/>
    <property type="project" value="TAIR"/>
</dbReference>
<dbReference type="CDD" id="cd22297">
    <property type="entry name" value="PSMD4_RAZUL"/>
    <property type="match status" value="1"/>
</dbReference>
<dbReference type="CDD" id="cd01452">
    <property type="entry name" value="VWA_26S_proteasome_subunit"/>
    <property type="match status" value="1"/>
</dbReference>
<dbReference type="FunFam" id="3.40.50.410:FF:000005">
    <property type="entry name" value="26S proteasome non-ATPase regulatory subunit 4"/>
    <property type="match status" value="1"/>
</dbReference>
<dbReference type="FunFam" id="1.10.287.3990:FF:000004">
    <property type="entry name" value="26S proteasome regulatory subunit N10"/>
    <property type="match status" value="1"/>
</dbReference>
<dbReference type="Gene3D" id="1.10.287.3990">
    <property type="match status" value="1"/>
</dbReference>
<dbReference type="Gene3D" id="3.40.50.410">
    <property type="entry name" value="von Willebrand factor, type A domain"/>
    <property type="match status" value="1"/>
</dbReference>
<dbReference type="InterPro" id="IPR027040">
    <property type="entry name" value="PSMD4"/>
</dbReference>
<dbReference type="InterPro" id="IPR049590">
    <property type="entry name" value="PSMD4_RAZUL-like"/>
</dbReference>
<dbReference type="InterPro" id="IPR003903">
    <property type="entry name" value="UIM_dom"/>
</dbReference>
<dbReference type="InterPro" id="IPR002035">
    <property type="entry name" value="VWF_A"/>
</dbReference>
<dbReference type="InterPro" id="IPR036465">
    <property type="entry name" value="vWFA_dom_sf"/>
</dbReference>
<dbReference type="PANTHER" id="PTHR10223">
    <property type="entry name" value="26S PROTEASOME NON-ATPASE REGULATORY SUBUNIT 4"/>
    <property type="match status" value="1"/>
</dbReference>
<dbReference type="PANTHER" id="PTHR10223:SF0">
    <property type="entry name" value="26S PROTEASOME NON-ATPASE REGULATORY SUBUNIT 4"/>
    <property type="match status" value="1"/>
</dbReference>
<dbReference type="Pfam" id="PF02809">
    <property type="entry name" value="UIM"/>
    <property type="match status" value="2"/>
</dbReference>
<dbReference type="Pfam" id="PF13519">
    <property type="entry name" value="VWA_2"/>
    <property type="match status" value="1"/>
</dbReference>
<dbReference type="SMART" id="SM00726">
    <property type="entry name" value="UIM"/>
    <property type="match status" value="3"/>
</dbReference>
<dbReference type="SMART" id="SM00327">
    <property type="entry name" value="VWA"/>
    <property type="match status" value="1"/>
</dbReference>
<dbReference type="SUPFAM" id="SSF53300">
    <property type="entry name" value="vWA-like"/>
    <property type="match status" value="1"/>
</dbReference>
<dbReference type="PROSITE" id="PS50330">
    <property type="entry name" value="UIM"/>
    <property type="match status" value="3"/>
</dbReference>
<dbReference type="PROSITE" id="PS50234">
    <property type="entry name" value="VWFA"/>
    <property type="match status" value="1"/>
</dbReference>
<evidence type="ECO:0000255" key="1">
    <source>
        <dbReference type="PROSITE-ProRule" id="PRU00213"/>
    </source>
</evidence>
<evidence type="ECO:0000255" key="2">
    <source>
        <dbReference type="PROSITE-ProRule" id="PRU00219"/>
    </source>
</evidence>
<evidence type="ECO:0000256" key="3">
    <source>
        <dbReference type="SAM" id="MobiDB-lite"/>
    </source>
</evidence>
<evidence type="ECO:0000269" key="4">
    <source>
    </source>
</evidence>
<evidence type="ECO:0000269" key="5">
    <source>
    </source>
</evidence>
<evidence type="ECO:0000269" key="6">
    <source>
    </source>
</evidence>
<evidence type="ECO:0000269" key="7">
    <source>
    </source>
</evidence>
<evidence type="ECO:0000269" key="8">
    <source>
    </source>
</evidence>
<evidence type="ECO:0000269" key="9">
    <source>
    </source>
</evidence>
<evidence type="ECO:0000269" key="10">
    <source>
    </source>
</evidence>
<evidence type="ECO:0000269" key="11">
    <source>
    </source>
</evidence>
<evidence type="ECO:0000269" key="12">
    <source>
    </source>
</evidence>
<evidence type="ECO:0000269" key="13">
    <source>
    </source>
</evidence>
<evidence type="ECO:0000269" key="14">
    <source>
    </source>
</evidence>
<evidence type="ECO:0000269" key="15">
    <source>
    </source>
</evidence>
<evidence type="ECO:0000269" key="16">
    <source>
    </source>
</evidence>
<evidence type="ECO:0000269" key="17">
    <source>
    </source>
</evidence>
<evidence type="ECO:0000305" key="18"/>
<evidence type="ECO:0007744" key="19">
    <source>
    </source>
</evidence>
<evidence type="ECO:0007829" key="20">
    <source>
        <dbReference type="PDB" id="8JTK"/>
    </source>
</evidence>
<evidence type="ECO:0007829" key="21">
    <source>
        <dbReference type="PDB" id="8JTL"/>
    </source>
</evidence>
<reference key="1">
    <citation type="journal article" date="1996" name="Proc. Natl. Acad. Sci. U.S.A.">
        <title>Arabidopsis MBP1 gene encodes a conserved ubiquitin recognition component of the 26S proteasome.</title>
        <authorList>
            <person name="van Nocker S."/>
            <person name="Deveraux Q."/>
            <person name="Rechsteiner M."/>
            <person name="Vierstra R.D."/>
        </authorList>
    </citation>
    <scope>NUCLEOTIDE SEQUENCE [MRNA]</scope>
    <scope>FUNCTION</scope>
    <source>
        <strain>cv. Columbia</strain>
        <tissue>Seedling</tissue>
    </source>
</reference>
<reference key="2">
    <citation type="journal article" date="1999" name="Nature">
        <title>Sequence and analysis of chromosome 4 of the plant Arabidopsis thaliana.</title>
        <authorList>
            <person name="Mayer K.F.X."/>
            <person name="Schueller C."/>
            <person name="Wambutt R."/>
            <person name="Murphy G."/>
            <person name="Volckaert G."/>
            <person name="Pohl T."/>
            <person name="Duesterhoeft A."/>
            <person name="Stiekema W."/>
            <person name="Entian K.-D."/>
            <person name="Terryn N."/>
            <person name="Harris B."/>
            <person name="Ansorge W."/>
            <person name="Brandt P."/>
            <person name="Grivell L.A."/>
            <person name="Rieger M."/>
            <person name="Weichselgartner M."/>
            <person name="de Simone V."/>
            <person name="Obermaier B."/>
            <person name="Mache R."/>
            <person name="Mueller M."/>
            <person name="Kreis M."/>
            <person name="Delseny M."/>
            <person name="Puigdomenech P."/>
            <person name="Watson M."/>
            <person name="Schmidtheini T."/>
            <person name="Reichert B."/>
            <person name="Portetelle D."/>
            <person name="Perez-Alonso M."/>
            <person name="Boutry M."/>
            <person name="Bancroft I."/>
            <person name="Vos P."/>
            <person name="Hoheisel J."/>
            <person name="Zimmermann W."/>
            <person name="Wedler H."/>
            <person name="Ridley P."/>
            <person name="Langham S.-A."/>
            <person name="McCullagh B."/>
            <person name="Bilham L."/>
            <person name="Robben J."/>
            <person name="van der Schueren J."/>
            <person name="Grymonprez B."/>
            <person name="Chuang Y.-J."/>
            <person name="Vandenbussche F."/>
            <person name="Braeken M."/>
            <person name="Weltjens I."/>
            <person name="Voet M."/>
            <person name="Bastiaens I."/>
            <person name="Aert R."/>
            <person name="Defoor E."/>
            <person name="Weitzenegger T."/>
            <person name="Bothe G."/>
            <person name="Ramsperger U."/>
            <person name="Hilbert H."/>
            <person name="Braun M."/>
            <person name="Holzer E."/>
            <person name="Brandt A."/>
            <person name="Peters S."/>
            <person name="van Staveren M."/>
            <person name="Dirkse W."/>
            <person name="Mooijman P."/>
            <person name="Klein Lankhorst R."/>
            <person name="Rose M."/>
            <person name="Hauf J."/>
            <person name="Koetter P."/>
            <person name="Berneiser S."/>
            <person name="Hempel S."/>
            <person name="Feldpausch M."/>
            <person name="Lamberth S."/>
            <person name="Van den Daele H."/>
            <person name="De Keyser A."/>
            <person name="Buysshaert C."/>
            <person name="Gielen J."/>
            <person name="Villarroel R."/>
            <person name="De Clercq R."/>
            <person name="van Montagu M."/>
            <person name="Rogers J."/>
            <person name="Cronin A."/>
            <person name="Quail M.A."/>
            <person name="Bray-Allen S."/>
            <person name="Clark L."/>
            <person name="Doggett J."/>
            <person name="Hall S."/>
            <person name="Kay M."/>
            <person name="Lennard N."/>
            <person name="McLay K."/>
            <person name="Mayes R."/>
            <person name="Pettett A."/>
            <person name="Rajandream M.A."/>
            <person name="Lyne M."/>
            <person name="Benes V."/>
            <person name="Rechmann S."/>
            <person name="Borkova D."/>
            <person name="Bloecker H."/>
            <person name="Scharfe M."/>
            <person name="Grimm M."/>
            <person name="Loehnert T.-H."/>
            <person name="Dose S."/>
            <person name="de Haan M."/>
            <person name="Maarse A.C."/>
            <person name="Schaefer M."/>
            <person name="Mueller-Auer S."/>
            <person name="Gabel C."/>
            <person name="Fuchs M."/>
            <person name="Fartmann B."/>
            <person name="Granderath K."/>
            <person name="Dauner D."/>
            <person name="Herzl A."/>
            <person name="Neumann S."/>
            <person name="Argiriou A."/>
            <person name="Vitale D."/>
            <person name="Liguori R."/>
            <person name="Piravandi E."/>
            <person name="Massenet O."/>
            <person name="Quigley F."/>
            <person name="Clabauld G."/>
            <person name="Muendlein A."/>
            <person name="Felber R."/>
            <person name="Schnabl S."/>
            <person name="Hiller R."/>
            <person name="Schmidt W."/>
            <person name="Lecharny A."/>
            <person name="Aubourg S."/>
            <person name="Chefdor F."/>
            <person name="Cooke R."/>
            <person name="Berger C."/>
            <person name="Monfort A."/>
            <person name="Casacuberta E."/>
            <person name="Gibbons T."/>
            <person name="Weber N."/>
            <person name="Vandenbol M."/>
            <person name="Bargues M."/>
            <person name="Terol J."/>
            <person name="Torres A."/>
            <person name="Perez-Perez A."/>
            <person name="Purnelle B."/>
            <person name="Bent E."/>
            <person name="Johnson S."/>
            <person name="Tacon D."/>
            <person name="Jesse T."/>
            <person name="Heijnen L."/>
            <person name="Schwarz S."/>
            <person name="Scholler P."/>
            <person name="Heber S."/>
            <person name="Francs P."/>
            <person name="Bielke C."/>
            <person name="Frishman D."/>
            <person name="Haase D."/>
            <person name="Lemcke K."/>
            <person name="Mewes H.-W."/>
            <person name="Stocker S."/>
            <person name="Zaccaria P."/>
            <person name="Bevan M."/>
            <person name="Wilson R.K."/>
            <person name="de la Bastide M."/>
            <person name="Habermann K."/>
            <person name="Parnell L."/>
            <person name="Dedhia N."/>
            <person name="Gnoj L."/>
            <person name="Schutz K."/>
            <person name="Huang E."/>
            <person name="Spiegel L."/>
            <person name="Sekhon M."/>
            <person name="Murray J."/>
            <person name="Sheet P."/>
            <person name="Cordes M."/>
            <person name="Abu-Threideh J."/>
            <person name="Stoneking T."/>
            <person name="Kalicki J."/>
            <person name="Graves T."/>
            <person name="Harmon G."/>
            <person name="Edwards J."/>
            <person name="Latreille P."/>
            <person name="Courtney L."/>
            <person name="Cloud J."/>
            <person name="Abbott A."/>
            <person name="Scott K."/>
            <person name="Johnson D."/>
            <person name="Minx P."/>
            <person name="Bentley D."/>
            <person name="Fulton B."/>
            <person name="Miller N."/>
            <person name="Greco T."/>
            <person name="Kemp K."/>
            <person name="Kramer J."/>
            <person name="Fulton L."/>
            <person name="Mardis E."/>
            <person name="Dante M."/>
            <person name="Pepin K."/>
            <person name="Hillier L.W."/>
            <person name="Nelson J."/>
            <person name="Spieth J."/>
            <person name="Ryan E."/>
            <person name="Andrews S."/>
            <person name="Geisel C."/>
            <person name="Layman D."/>
            <person name="Du H."/>
            <person name="Ali J."/>
            <person name="Berghoff A."/>
            <person name="Jones K."/>
            <person name="Drone K."/>
            <person name="Cotton M."/>
            <person name="Joshu C."/>
            <person name="Antonoiu B."/>
            <person name="Zidanic M."/>
            <person name="Strong C."/>
            <person name="Sun H."/>
            <person name="Lamar B."/>
            <person name="Yordan C."/>
            <person name="Ma P."/>
            <person name="Zhong J."/>
            <person name="Preston R."/>
            <person name="Vil D."/>
            <person name="Shekher M."/>
            <person name="Matero A."/>
            <person name="Shah R."/>
            <person name="Swaby I.K."/>
            <person name="O'Shaughnessy A."/>
            <person name="Rodriguez M."/>
            <person name="Hoffman J."/>
            <person name="Till S."/>
            <person name="Granat S."/>
            <person name="Shohdy N."/>
            <person name="Hasegawa A."/>
            <person name="Hameed A."/>
            <person name="Lodhi M."/>
            <person name="Johnson A."/>
            <person name="Chen E."/>
            <person name="Marra M.A."/>
            <person name="Martienssen R."/>
            <person name="McCombie W.R."/>
        </authorList>
    </citation>
    <scope>NUCLEOTIDE SEQUENCE [LARGE SCALE GENOMIC DNA]</scope>
    <source>
        <strain>cv. Columbia</strain>
    </source>
</reference>
<reference key="3">
    <citation type="journal article" date="2017" name="Plant J.">
        <title>Araport11: a complete reannotation of the Arabidopsis thaliana reference genome.</title>
        <authorList>
            <person name="Cheng C.Y."/>
            <person name="Krishnakumar V."/>
            <person name="Chan A.P."/>
            <person name="Thibaud-Nissen F."/>
            <person name="Schobel S."/>
            <person name="Town C.D."/>
        </authorList>
    </citation>
    <scope>GENOME REANNOTATION</scope>
    <source>
        <strain>cv. Columbia</strain>
    </source>
</reference>
<reference key="4">
    <citation type="journal article" date="2003" name="Science">
        <title>Empirical analysis of transcriptional activity in the Arabidopsis genome.</title>
        <authorList>
            <person name="Yamada K."/>
            <person name="Lim J."/>
            <person name="Dale J.M."/>
            <person name="Chen H."/>
            <person name="Shinn P."/>
            <person name="Palm C.J."/>
            <person name="Southwick A.M."/>
            <person name="Wu H.C."/>
            <person name="Kim C.J."/>
            <person name="Nguyen M."/>
            <person name="Pham P.K."/>
            <person name="Cheuk R.F."/>
            <person name="Karlin-Newmann G."/>
            <person name="Liu S.X."/>
            <person name="Lam B."/>
            <person name="Sakano H."/>
            <person name="Wu T."/>
            <person name="Yu G."/>
            <person name="Miranda M."/>
            <person name="Quach H.L."/>
            <person name="Tripp M."/>
            <person name="Chang C.H."/>
            <person name="Lee J.M."/>
            <person name="Toriumi M.J."/>
            <person name="Chan M.M."/>
            <person name="Tang C.C."/>
            <person name="Onodera C.S."/>
            <person name="Deng J.M."/>
            <person name="Akiyama K."/>
            <person name="Ansari Y."/>
            <person name="Arakawa T."/>
            <person name="Banh J."/>
            <person name="Banno F."/>
            <person name="Bowser L."/>
            <person name="Brooks S.Y."/>
            <person name="Carninci P."/>
            <person name="Chao Q."/>
            <person name="Choy N."/>
            <person name="Enju A."/>
            <person name="Goldsmith A.D."/>
            <person name="Gurjal M."/>
            <person name="Hansen N.F."/>
            <person name="Hayashizaki Y."/>
            <person name="Johnson-Hopson C."/>
            <person name="Hsuan V.W."/>
            <person name="Iida K."/>
            <person name="Karnes M."/>
            <person name="Khan S."/>
            <person name="Koesema E."/>
            <person name="Ishida J."/>
            <person name="Jiang P.X."/>
            <person name="Jones T."/>
            <person name="Kawai J."/>
            <person name="Kamiya A."/>
            <person name="Meyers C."/>
            <person name="Nakajima M."/>
            <person name="Narusaka M."/>
            <person name="Seki M."/>
            <person name="Sakurai T."/>
            <person name="Satou M."/>
            <person name="Tamse R."/>
            <person name="Vaysberg M."/>
            <person name="Wallender E.K."/>
            <person name="Wong C."/>
            <person name="Yamamura Y."/>
            <person name="Yuan S."/>
            <person name="Shinozaki K."/>
            <person name="Davis R.W."/>
            <person name="Theologis A."/>
            <person name="Ecker J.R."/>
        </authorList>
    </citation>
    <scope>NUCLEOTIDE SEQUENCE [LARGE SCALE MRNA]</scope>
    <source>
        <strain>cv. Columbia</strain>
    </source>
</reference>
<reference key="5">
    <citation type="submission" date="2002-03" db="EMBL/GenBank/DDBJ databases">
        <title>Full-length cDNA from Arabidopsis thaliana.</title>
        <authorList>
            <person name="Brover V.V."/>
            <person name="Troukhan M.E."/>
            <person name="Alexandrov N.A."/>
            <person name="Lu Y.-P."/>
            <person name="Flavell R.B."/>
            <person name="Feldmann K.A."/>
        </authorList>
    </citation>
    <scope>NUCLEOTIDE SEQUENCE [LARGE SCALE MRNA]</scope>
</reference>
<reference key="6">
    <citation type="journal article" date="1995" name="J. Biol. Chem.">
        <title>Inhibition of ubiquitin-mediated proteolysis by the Arabidopsis 26 S protease subunit S5a.</title>
        <authorList>
            <person name="Deveraux Q."/>
            <person name="van Nocker S."/>
            <person name="Mahaffey D."/>
            <person name="Vierstra R.D."/>
            <person name="Rechsteiner M."/>
        </authorList>
    </citation>
    <scope>FUNCTION</scope>
</reference>
<reference key="7">
    <citation type="journal article" date="1998" name="Cell">
        <title>A subcomplex of the proteasome regulatory particle required for ubiquitin-conjugate degradation and related to the COP9-signalosome and eIF3.</title>
        <authorList>
            <person name="Glickman M.H."/>
            <person name="Rubin D.M."/>
            <person name="Coux O."/>
            <person name="Wefes I."/>
            <person name="Pfeifer G."/>
            <person name="Cjeka Z."/>
            <person name="Baumeister W."/>
            <person name="Fried V.A."/>
            <person name="Finley D."/>
        </authorList>
    </citation>
    <scope>SUBUNIT</scope>
    <scope>FUNCTION</scope>
</reference>
<reference key="8">
    <citation type="journal article" date="1998" name="J. Biol. Chem.">
        <title>Multiubiquitin chain binding and protein degradation are mediated by distinct domains within the 26 S proteasome subunit Mcb1.</title>
        <authorList>
            <person name="Fu H."/>
            <person name="Sadis S."/>
            <person name="Rubin D.M."/>
            <person name="Glickman M."/>
            <person name="van Nocker S."/>
            <person name="Finley D."/>
            <person name="Vierstra R.D."/>
        </authorList>
    </citation>
    <scope>POLYUBIQUITIN BINDING</scope>
    <scope>FUNCTION</scope>
</reference>
<reference key="9">
    <citation type="journal article" date="2003" name="Plant Cell">
        <title>The pleiotropic role of the 26S proteasome subunit RPN10 in Arabidopsis growth and development supports a substrate-specific function in abscisic acid signaling.</title>
        <authorList>
            <person name="Smalle J."/>
            <person name="Kurepa J."/>
            <person name="Yang P."/>
            <person name="Emborg T.J."/>
            <person name="Babiychuk E."/>
            <person name="Kushnir S."/>
            <person name="Vierstra R.D."/>
        </authorList>
    </citation>
    <scope>FUNCTION</scope>
    <scope>DISRUPTION PHENOTYPE</scope>
</reference>
<reference key="10">
    <citation type="journal article" date="2004" name="J. Biol. Chem.">
        <title>Purification of the Arabidopsis 26 S proteasome: biochemical and molecular analyses revealed the presence of multiple isoforms.</title>
        <authorList>
            <person name="Yang P."/>
            <person name="Fu H."/>
            <person name="Walker J."/>
            <person name="Papa C.M."/>
            <person name="Smalle J."/>
            <person name="Ju Y.-M."/>
            <person name="Vierstra R.D."/>
        </authorList>
    </citation>
    <scope>TISSUE SPECIFICITY</scope>
</reference>
<reference key="11">
    <citation type="journal article" date="2008" name="Biochem. J.">
        <title>Characterization of a new family of protein kinases from Arabidopsis containing phosphoinositide 3/4-kinase and ubiquitin-like domains.</title>
        <authorList>
            <person name="Galvao R.M."/>
            <person name="Kota U."/>
            <person name="Soderblom E.J."/>
            <person name="Goshe M.B."/>
            <person name="Boss W.F."/>
        </authorList>
    </citation>
    <scope>INTERACTION WITH PI4KG4</scope>
    <scope>PHOSPHORYLATION BY PI4KG4</scope>
</reference>
<reference key="12">
    <citation type="journal article" date="2008" name="J. Proteome Res.">
        <title>Site-specific phosphorylation profiling of Arabidopsis proteins by mass spectrometry and peptide chip analysis.</title>
        <authorList>
            <person name="de la Fuente van Bentem S."/>
            <person name="Anrather D."/>
            <person name="Dohnal I."/>
            <person name="Roitinger E."/>
            <person name="Csaszar E."/>
            <person name="Joore J."/>
            <person name="Buijnink J."/>
            <person name="Carreri A."/>
            <person name="Forzani C."/>
            <person name="Lorkovic Z.J."/>
            <person name="Barta A."/>
            <person name="Lecourieux D."/>
            <person name="Verhounig A."/>
            <person name="Jonak C."/>
            <person name="Hirt H."/>
        </authorList>
    </citation>
    <scope>PHOSPHORYLATION [LARGE SCALE ANALYSIS] AT SER-263</scope>
    <scope>IDENTIFICATION BY MASS SPECTROMETRY [LARGE SCALE ANALYSIS]</scope>
    <source>
        <tissue>Root</tissue>
    </source>
</reference>
<reference key="13">
    <citation type="journal article" date="2008" name="Plant J.">
        <title>26S proteasome regulatory particle mutants have increased oxidative stress tolerance.</title>
        <authorList>
            <person name="Kurepa J."/>
            <person name="Toh-E A."/>
            <person name="Smalle J.A."/>
        </authorList>
    </citation>
    <scope>FUNCTION</scope>
    <scope>DISRUPTION PHENOTYPE</scope>
</reference>
<reference key="14">
    <citation type="journal article" date="2009" name="Plant Physiol.">
        <title>Loss of 26S proteasome function leads to increased cell size and decreased cell number in Arabidopsis shoot organs.</title>
        <authorList>
            <person name="Kurepa J."/>
            <person name="Wang S."/>
            <person name="Li Y."/>
            <person name="Zaitlin D."/>
            <person name="Pierce A.J."/>
            <person name="Smalle J.A."/>
        </authorList>
    </citation>
    <scope>DISRUPTION PHENOTYPE</scope>
    <scope>FUNCTION</scope>
</reference>
<reference key="15">
    <citation type="journal article" date="2009" name="Plant Physiol.">
        <title>Large-scale Arabidopsis phosphoproteome profiling reveals novel chloroplast kinase substrates and phosphorylation networks.</title>
        <authorList>
            <person name="Reiland S."/>
            <person name="Messerli G."/>
            <person name="Baerenfaller K."/>
            <person name="Gerrits B."/>
            <person name="Endler A."/>
            <person name="Grossmann J."/>
            <person name="Gruissem W."/>
            <person name="Baginsky S."/>
        </authorList>
    </citation>
    <scope>IDENTIFICATION BY MASS SPECTROMETRY [LARGE SCALE ANALYSIS]</scope>
</reference>
<reference key="16">
    <citation type="journal article" date="2010" name="FEBS J.">
        <title>Cross-species divergence of the major recognition pathways of ubiquitylated substrates for ubiquitin/26S proteasome-mediated proteolysis.</title>
        <authorList>
            <person name="Fatimababy A.S."/>
            <person name="Lin Y.L."/>
            <person name="Usharani R."/>
            <person name="Radjacommare R."/>
            <person name="Wang H.T."/>
            <person name="Tsai H.L."/>
            <person name="Lee Y."/>
            <person name="Fu H."/>
        </authorList>
    </citation>
    <scope>FUNCTION</scope>
    <scope>INTERACTION WITH RAD23B; RAD23C; RAD23D AND DSK2A</scope>
    <scope>DISRUPTION PHENOTYPE</scope>
</reference>
<reference key="17">
    <citation type="journal article" date="2010" name="J. Biol. Chem.">
        <title>Affinity purification of the Arabidopsis 26 S proteasome reveals a diverse array of plant proteolytic complexes.</title>
        <authorList>
            <person name="Book A.J."/>
            <person name="Gladman N.P."/>
            <person name="Lee S.S."/>
            <person name="Scalf M."/>
            <person name="Smith L.M."/>
            <person name="Vierstra R.D."/>
        </authorList>
    </citation>
    <scope>IDENTIFICATION BY MASS SPECTROMETRY</scope>
    <scope>CHARACTERIZATION OF THE 26S PROTEASOME COMPLEX</scope>
    <scope>SUBUNIT</scope>
</reference>
<reference key="18">
    <citation type="journal article" date="2010" name="Plant Cell">
        <title>The RAD23 family provides an essential connection between the 26S proteasome and ubiquitylated proteins in Arabidopsis.</title>
        <authorList>
            <person name="Farmer L.M."/>
            <person name="Book A.J."/>
            <person name="Lee K.H."/>
            <person name="Lin Y.L."/>
            <person name="Fu H."/>
            <person name="Vierstra R.D."/>
        </authorList>
    </citation>
    <scope>INTERACTION WITH RAD23B</scope>
    <scope>POLYUBIQUITIN BINDING</scope>
</reference>
<reference key="19">
    <citation type="journal article" date="2010" name="Trends Plant Sci.">
        <title>Proteasomal recognition of ubiquitylated substrates.</title>
        <authorList>
            <person name="Fu H."/>
            <person name="Lin Y.L."/>
            <person name="Fatimababy A.S."/>
        </authorList>
    </citation>
    <scope>REVIEW</scope>
</reference>
<reference key="20">
    <citation type="journal article" date="2011" name="Plant Cell">
        <title>The defective proteasome but not substrate recognition function is responsible for the null phenotypes of the Arabidopsis proteasome subunit RPN10.</title>
        <authorList>
            <person name="Lin Y.-L."/>
            <person name="Sung S.-C."/>
            <person name="Tsai H.-L."/>
            <person name="Yu T.-T."/>
            <person name="Radjacommare R."/>
            <person name="Usharani R."/>
            <person name="Fatimababy A.S."/>
            <person name="Lin H.-Y."/>
            <person name="Wang Y.-Y."/>
            <person name="Fu H."/>
        </authorList>
    </citation>
    <scope>FUNCTION</scope>
    <scope>DISRUPTION PHENOTYPE</scope>
    <scope>POLYUBIQUITIN BINDING</scope>
    <scope>INTERACTION WITH RAD23B; RAD23C; RAD23D AND DSK2B</scope>
</reference>
<reference key="21">
    <citation type="journal article" date="2012" name="Plant Signal. Behav.">
        <title>In vivo relevance of substrate recognition function of major Arabidopsis ubiquitin receptors.</title>
        <authorList>
            <person name="Lin Y.L."/>
            <person name="Fu H."/>
        </authorList>
    </citation>
    <scope>FUNCTION</scope>
    <scope>DISRUPTION PHENOTYPE</scope>
</reference>
<gene>
    <name type="primary">RPN10</name>
    <name type="synonym">MBP1</name>
    <name type="synonym">MCB1</name>
    <name type="ordered locus">At4g38630</name>
    <name type="ORF">F20M13.190</name>
    <name type="ORF">T9A14.7</name>
</gene>
<name>PSMD4_ARATH</name>